<dbReference type="EC" id="3.6.5.n1" evidence="1"/>
<dbReference type="EMBL" id="CP001010">
    <property type="protein sequence ID" value="ACB43689.1"/>
    <property type="molecule type" value="Genomic_DNA"/>
</dbReference>
<dbReference type="SMR" id="B1XTL2"/>
<dbReference type="STRING" id="452638.Pnec_0411"/>
<dbReference type="KEGG" id="pne:Pnec_0411"/>
<dbReference type="eggNOG" id="COG0481">
    <property type="taxonomic scope" value="Bacteria"/>
</dbReference>
<dbReference type="HOGENOM" id="CLU_009995_3_3_4"/>
<dbReference type="OrthoDB" id="9801472at2"/>
<dbReference type="GO" id="GO:0005886">
    <property type="term" value="C:plasma membrane"/>
    <property type="evidence" value="ECO:0007669"/>
    <property type="project" value="UniProtKB-SubCell"/>
</dbReference>
<dbReference type="GO" id="GO:0005525">
    <property type="term" value="F:GTP binding"/>
    <property type="evidence" value="ECO:0007669"/>
    <property type="project" value="UniProtKB-UniRule"/>
</dbReference>
<dbReference type="GO" id="GO:0003924">
    <property type="term" value="F:GTPase activity"/>
    <property type="evidence" value="ECO:0007669"/>
    <property type="project" value="UniProtKB-UniRule"/>
</dbReference>
<dbReference type="GO" id="GO:0097216">
    <property type="term" value="F:guanosine tetraphosphate binding"/>
    <property type="evidence" value="ECO:0007669"/>
    <property type="project" value="UniProtKB-ARBA"/>
</dbReference>
<dbReference type="GO" id="GO:0043022">
    <property type="term" value="F:ribosome binding"/>
    <property type="evidence" value="ECO:0007669"/>
    <property type="project" value="UniProtKB-UniRule"/>
</dbReference>
<dbReference type="GO" id="GO:0003746">
    <property type="term" value="F:translation elongation factor activity"/>
    <property type="evidence" value="ECO:0007669"/>
    <property type="project" value="UniProtKB-UniRule"/>
</dbReference>
<dbReference type="GO" id="GO:0045727">
    <property type="term" value="P:positive regulation of translation"/>
    <property type="evidence" value="ECO:0007669"/>
    <property type="project" value="UniProtKB-UniRule"/>
</dbReference>
<dbReference type="CDD" id="cd03699">
    <property type="entry name" value="EF4_II"/>
    <property type="match status" value="1"/>
</dbReference>
<dbReference type="CDD" id="cd16260">
    <property type="entry name" value="EF4_III"/>
    <property type="match status" value="1"/>
</dbReference>
<dbReference type="CDD" id="cd01890">
    <property type="entry name" value="LepA"/>
    <property type="match status" value="1"/>
</dbReference>
<dbReference type="CDD" id="cd03709">
    <property type="entry name" value="lepA_C"/>
    <property type="match status" value="1"/>
</dbReference>
<dbReference type="FunFam" id="3.40.50.300:FF:000078">
    <property type="entry name" value="Elongation factor 4"/>
    <property type="match status" value="1"/>
</dbReference>
<dbReference type="FunFam" id="2.40.30.10:FF:000015">
    <property type="entry name" value="Translation factor GUF1, mitochondrial"/>
    <property type="match status" value="1"/>
</dbReference>
<dbReference type="FunFam" id="3.30.70.240:FF:000007">
    <property type="entry name" value="Translation factor GUF1, mitochondrial"/>
    <property type="match status" value="1"/>
</dbReference>
<dbReference type="FunFam" id="3.30.70.2570:FF:000001">
    <property type="entry name" value="Translation factor GUF1, mitochondrial"/>
    <property type="match status" value="1"/>
</dbReference>
<dbReference type="FunFam" id="3.30.70.870:FF:000004">
    <property type="entry name" value="Translation factor GUF1, mitochondrial"/>
    <property type="match status" value="1"/>
</dbReference>
<dbReference type="Gene3D" id="3.30.70.240">
    <property type="match status" value="1"/>
</dbReference>
<dbReference type="Gene3D" id="3.30.70.2570">
    <property type="entry name" value="Elongation factor 4, C-terminal domain"/>
    <property type="match status" value="1"/>
</dbReference>
<dbReference type="Gene3D" id="3.30.70.870">
    <property type="entry name" value="Elongation Factor G (Translational Gtpase), domain 3"/>
    <property type="match status" value="1"/>
</dbReference>
<dbReference type="Gene3D" id="3.40.50.300">
    <property type="entry name" value="P-loop containing nucleotide triphosphate hydrolases"/>
    <property type="match status" value="1"/>
</dbReference>
<dbReference type="Gene3D" id="2.40.30.10">
    <property type="entry name" value="Translation factors"/>
    <property type="match status" value="1"/>
</dbReference>
<dbReference type="HAMAP" id="MF_00071">
    <property type="entry name" value="LepA"/>
    <property type="match status" value="1"/>
</dbReference>
<dbReference type="InterPro" id="IPR006297">
    <property type="entry name" value="EF-4"/>
</dbReference>
<dbReference type="InterPro" id="IPR035647">
    <property type="entry name" value="EFG_III/V"/>
</dbReference>
<dbReference type="InterPro" id="IPR000640">
    <property type="entry name" value="EFG_V-like"/>
</dbReference>
<dbReference type="InterPro" id="IPR004161">
    <property type="entry name" value="EFTu-like_2"/>
</dbReference>
<dbReference type="InterPro" id="IPR031157">
    <property type="entry name" value="G_TR_CS"/>
</dbReference>
<dbReference type="InterPro" id="IPR038363">
    <property type="entry name" value="LepA_C_sf"/>
</dbReference>
<dbReference type="InterPro" id="IPR013842">
    <property type="entry name" value="LepA_CTD"/>
</dbReference>
<dbReference type="InterPro" id="IPR035654">
    <property type="entry name" value="LepA_IV"/>
</dbReference>
<dbReference type="InterPro" id="IPR027417">
    <property type="entry name" value="P-loop_NTPase"/>
</dbReference>
<dbReference type="InterPro" id="IPR005225">
    <property type="entry name" value="Small_GTP-bd"/>
</dbReference>
<dbReference type="InterPro" id="IPR000795">
    <property type="entry name" value="T_Tr_GTP-bd_dom"/>
</dbReference>
<dbReference type="InterPro" id="IPR009000">
    <property type="entry name" value="Transl_B-barrel_sf"/>
</dbReference>
<dbReference type="NCBIfam" id="TIGR01393">
    <property type="entry name" value="lepA"/>
    <property type="match status" value="1"/>
</dbReference>
<dbReference type="NCBIfam" id="TIGR00231">
    <property type="entry name" value="small_GTP"/>
    <property type="match status" value="1"/>
</dbReference>
<dbReference type="PANTHER" id="PTHR43512:SF4">
    <property type="entry name" value="TRANSLATION FACTOR GUF1 HOMOLOG, CHLOROPLASTIC"/>
    <property type="match status" value="1"/>
</dbReference>
<dbReference type="PANTHER" id="PTHR43512">
    <property type="entry name" value="TRANSLATION FACTOR GUF1-RELATED"/>
    <property type="match status" value="1"/>
</dbReference>
<dbReference type="Pfam" id="PF00679">
    <property type="entry name" value="EFG_C"/>
    <property type="match status" value="1"/>
</dbReference>
<dbReference type="Pfam" id="PF00009">
    <property type="entry name" value="GTP_EFTU"/>
    <property type="match status" value="1"/>
</dbReference>
<dbReference type="Pfam" id="PF03144">
    <property type="entry name" value="GTP_EFTU_D2"/>
    <property type="match status" value="1"/>
</dbReference>
<dbReference type="Pfam" id="PF06421">
    <property type="entry name" value="LepA_C"/>
    <property type="match status" value="1"/>
</dbReference>
<dbReference type="PRINTS" id="PR00315">
    <property type="entry name" value="ELONGATNFCT"/>
</dbReference>
<dbReference type="SMART" id="SM00838">
    <property type="entry name" value="EFG_C"/>
    <property type="match status" value="1"/>
</dbReference>
<dbReference type="SUPFAM" id="SSF54980">
    <property type="entry name" value="EF-G C-terminal domain-like"/>
    <property type="match status" value="2"/>
</dbReference>
<dbReference type="SUPFAM" id="SSF52540">
    <property type="entry name" value="P-loop containing nucleoside triphosphate hydrolases"/>
    <property type="match status" value="1"/>
</dbReference>
<dbReference type="SUPFAM" id="SSF50447">
    <property type="entry name" value="Translation proteins"/>
    <property type="match status" value="1"/>
</dbReference>
<dbReference type="PROSITE" id="PS00301">
    <property type="entry name" value="G_TR_1"/>
    <property type="match status" value="1"/>
</dbReference>
<dbReference type="PROSITE" id="PS51722">
    <property type="entry name" value="G_TR_2"/>
    <property type="match status" value="1"/>
</dbReference>
<evidence type="ECO:0000255" key="1">
    <source>
        <dbReference type="HAMAP-Rule" id="MF_00071"/>
    </source>
</evidence>
<protein>
    <recommendedName>
        <fullName evidence="1">Elongation factor 4</fullName>
        <shortName evidence="1">EF-4</shortName>
        <ecNumber evidence="1">3.6.5.n1</ecNumber>
    </recommendedName>
    <alternativeName>
        <fullName evidence="1">Ribosomal back-translocase LepA</fullName>
    </alternativeName>
</protein>
<sequence>MDLIRNFSIIAHIDHGKSTLADRIIQLCGGLSDREMEAQVLDSMDIERERGITIKAQTAALNYKAKDGKIYNINLIDTPGHVDFSYEVSRSLSACEGALLVVDASQGVEAQTVANCYMALGLGVEVVPVLNKIDLPQADPERAKKEIEDVIGIDASEAVTCSAKTGLGVADVIEEMIARVPPPTGNAEDPLQALIIDSWFDNYVGVVMLVRIVNGTLKPKDKITLMANGSSHLVEHVGVFSPKSVDRPELSAGQVGFVIAGIKELKAAKVGDTVTHSPGQQGRVPASEPLPGFKEVKPQVFAGLYPVESSEYDQLRESLEKLQLNDAALLYEPEVSQALGFGFRCGFLGLLHMEIVQERLERQYGMNLITTAPTVVYQVEQSSGSIISVDNPSKMPEASKINTILEPIVTVNLYMPQEYVGSIITLCVGKRGIQMDMNYLGRQVKLTYELPMAEIVLDFFDKMKSISRGYASMDYEFKEYRPADVVKVDILINGERVDALSVIVHRSNSQSRGREVVAKMRDIIPRQMFDVAIQAAIGSNIVARENVKALRKNVLAKCYGGDISRKRKLLEKQKEGKKRMKQVGNVEIPQEAFLAILQVED</sequence>
<organism>
    <name type="scientific">Polynucleobacter necessarius subsp. necessarius (strain STIR1)</name>
    <dbReference type="NCBI Taxonomy" id="452638"/>
    <lineage>
        <taxon>Bacteria</taxon>
        <taxon>Pseudomonadati</taxon>
        <taxon>Pseudomonadota</taxon>
        <taxon>Betaproteobacteria</taxon>
        <taxon>Burkholderiales</taxon>
        <taxon>Burkholderiaceae</taxon>
        <taxon>Polynucleobacter</taxon>
    </lineage>
</organism>
<proteinExistence type="inferred from homology"/>
<name>LEPA_POLNS</name>
<feature type="chain" id="PRO_1000092424" description="Elongation factor 4">
    <location>
        <begin position="1"/>
        <end position="601"/>
    </location>
</feature>
<feature type="domain" description="tr-type G">
    <location>
        <begin position="2"/>
        <end position="184"/>
    </location>
</feature>
<feature type="binding site" evidence="1">
    <location>
        <begin position="14"/>
        <end position="19"/>
    </location>
    <ligand>
        <name>GTP</name>
        <dbReference type="ChEBI" id="CHEBI:37565"/>
    </ligand>
</feature>
<feature type="binding site" evidence="1">
    <location>
        <begin position="131"/>
        <end position="134"/>
    </location>
    <ligand>
        <name>GTP</name>
        <dbReference type="ChEBI" id="CHEBI:37565"/>
    </ligand>
</feature>
<gene>
    <name evidence="1" type="primary">lepA</name>
    <name type="ordered locus">Pnec_0411</name>
</gene>
<keyword id="KW-0997">Cell inner membrane</keyword>
<keyword id="KW-1003">Cell membrane</keyword>
<keyword id="KW-0342">GTP-binding</keyword>
<keyword id="KW-0378">Hydrolase</keyword>
<keyword id="KW-0472">Membrane</keyword>
<keyword id="KW-0547">Nucleotide-binding</keyword>
<keyword id="KW-0648">Protein biosynthesis</keyword>
<reference key="1">
    <citation type="journal article" date="2013" name="Proc. Natl. Acad. Sci. U.S.A.">
        <title>Polynucleobacter necessarius, a model for genome reduction in both free-living and symbiotic bacteria.</title>
        <authorList>
            <person name="Boscaro V."/>
            <person name="Felletti M."/>
            <person name="Vannini C."/>
            <person name="Ackerman M.S."/>
            <person name="Chain P.S."/>
            <person name="Malfatti S."/>
            <person name="Vergez L.M."/>
            <person name="Shin M."/>
            <person name="Doak T.G."/>
            <person name="Lynch M."/>
            <person name="Petroni G."/>
        </authorList>
    </citation>
    <scope>NUCLEOTIDE SEQUENCE [LARGE SCALE GENOMIC DNA]</scope>
    <source>
        <strain>STIR1</strain>
    </source>
</reference>
<accession>B1XTL2</accession>
<comment type="function">
    <text evidence="1">Required for accurate and efficient protein synthesis under certain stress conditions. May act as a fidelity factor of the translation reaction, by catalyzing a one-codon backward translocation of tRNAs on improperly translocated ribosomes. Back-translocation proceeds from a post-translocation (POST) complex to a pre-translocation (PRE) complex, thus giving elongation factor G a second chance to translocate the tRNAs correctly. Binds to ribosomes in a GTP-dependent manner.</text>
</comment>
<comment type="catalytic activity">
    <reaction evidence="1">
        <text>GTP + H2O = GDP + phosphate + H(+)</text>
        <dbReference type="Rhea" id="RHEA:19669"/>
        <dbReference type="ChEBI" id="CHEBI:15377"/>
        <dbReference type="ChEBI" id="CHEBI:15378"/>
        <dbReference type="ChEBI" id="CHEBI:37565"/>
        <dbReference type="ChEBI" id="CHEBI:43474"/>
        <dbReference type="ChEBI" id="CHEBI:58189"/>
        <dbReference type="EC" id="3.6.5.n1"/>
    </reaction>
</comment>
<comment type="subcellular location">
    <subcellularLocation>
        <location evidence="1">Cell inner membrane</location>
        <topology evidence="1">Peripheral membrane protein</topology>
        <orientation evidence="1">Cytoplasmic side</orientation>
    </subcellularLocation>
</comment>
<comment type="similarity">
    <text evidence="1">Belongs to the TRAFAC class translation factor GTPase superfamily. Classic translation factor GTPase family. LepA subfamily.</text>
</comment>